<feature type="chain" id="PRO_0000382096" description="ATP synthase subunit delta">
    <location>
        <begin position="1"/>
        <end position="181"/>
    </location>
</feature>
<organism>
    <name type="scientific">Desulfotalea psychrophila (strain LSv54 / DSM 12343)</name>
    <dbReference type="NCBI Taxonomy" id="177439"/>
    <lineage>
        <taxon>Bacteria</taxon>
        <taxon>Pseudomonadati</taxon>
        <taxon>Thermodesulfobacteriota</taxon>
        <taxon>Desulfobulbia</taxon>
        <taxon>Desulfobulbales</taxon>
        <taxon>Desulfocapsaceae</taxon>
        <taxon>Desulfotalea</taxon>
    </lineage>
</organism>
<sequence length="181" mass="19681">MKQTILARRYAKAVFSIGADSGKYGEYNDALQAVANLYMTNPDVVDALTNPLYPLELREKVMVGIVKSMDIDAVMSNFLNLLVEKKRAEILPEIAEEFQAMVDDAQNLSHGSVISAVELSEELQGKIQQTLEKLTGKKVELTTSVDPSIIGGIVAKVGDLVLDGSIKTQLAGLKESIKGRE</sequence>
<proteinExistence type="inferred from homology"/>
<gene>
    <name evidence="1" type="primary">atpH</name>
    <name type="ordered locus">DP0831</name>
</gene>
<keyword id="KW-0066">ATP synthesis</keyword>
<keyword id="KW-0997">Cell inner membrane</keyword>
<keyword id="KW-1003">Cell membrane</keyword>
<keyword id="KW-0139">CF(1)</keyword>
<keyword id="KW-0375">Hydrogen ion transport</keyword>
<keyword id="KW-0406">Ion transport</keyword>
<keyword id="KW-0472">Membrane</keyword>
<keyword id="KW-1185">Reference proteome</keyword>
<keyword id="KW-0813">Transport</keyword>
<reference key="1">
    <citation type="journal article" date="2004" name="Environ. Microbiol.">
        <title>The genome of Desulfotalea psychrophila, a sulfate-reducing bacterium from permanently cold Arctic sediments.</title>
        <authorList>
            <person name="Rabus R."/>
            <person name="Ruepp A."/>
            <person name="Frickey T."/>
            <person name="Rattei T."/>
            <person name="Fartmann B."/>
            <person name="Stark M."/>
            <person name="Bauer M."/>
            <person name="Zibat A."/>
            <person name="Lombardot T."/>
            <person name="Becker I."/>
            <person name="Amann J."/>
            <person name="Gellner K."/>
            <person name="Teeling H."/>
            <person name="Leuschner W.D."/>
            <person name="Gloeckner F.-O."/>
            <person name="Lupas A.N."/>
            <person name="Amann R."/>
            <person name="Klenk H.-P."/>
        </authorList>
    </citation>
    <scope>NUCLEOTIDE SEQUENCE [LARGE SCALE GENOMIC DNA]</scope>
    <source>
        <strain>DSM 12343 / LSv54</strain>
    </source>
</reference>
<protein>
    <recommendedName>
        <fullName evidence="1">ATP synthase subunit delta</fullName>
    </recommendedName>
    <alternativeName>
        <fullName evidence="1">ATP synthase F(1) sector subunit delta</fullName>
    </alternativeName>
    <alternativeName>
        <fullName evidence="1">F-type ATPase subunit delta</fullName>
        <shortName evidence="1">F-ATPase subunit delta</shortName>
    </alternativeName>
</protein>
<dbReference type="EMBL" id="CR522870">
    <property type="protein sequence ID" value="CAG35560.1"/>
    <property type="molecule type" value="Genomic_DNA"/>
</dbReference>
<dbReference type="RefSeq" id="WP_011188076.1">
    <property type="nucleotide sequence ID" value="NC_006138.1"/>
</dbReference>
<dbReference type="SMR" id="Q6AQ13"/>
<dbReference type="STRING" id="177439.DP0831"/>
<dbReference type="KEGG" id="dps:DP0831"/>
<dbReference type="eggNOG" id="COG0712">
    <property type="taxonomic scope" value="Bacteria"/>
</dbReference>
<dbReference type="HOGENOM" id="CLU_085114_1_1_7"/>
<dbReference type="OrthoDB" id="9802471at2"/>
<dbReference type="Proteomes" id="UP000000602">
    <property type="component" value="Chromosome"/>
</dbReference>
<dbReference type="GO" id="GO:0005886">
    <property type="term" value="C:plasma membrane"/>
    <property type="evidence" value="ECO:0007669"/>
    <property type="project" value="UniProtKB-SubCell"/>
</dbReference>
<dbReference type="GO" id="GO:0045259">
    <property type="term" value="C:proton-transporting ATP synthase complex"/>
    <property type="evidence" value="ECO:0007669"/>
    <property type="project" value="UniProtKB-KW"/>
</dbReference>
<dbReference type="GO" id="GO:0046933">
    <property type="term" value="F:proton-transporting ATP synthase activity, rotational mechanism"/>
    <property type="evidence" value="ECO:0007669"/>
    <property type="project" value="UniProtKB-UniRule"/>
</dbReference>
<dbReference type="Gene3D" id="1.10.520.20">
    <property type="entry name" value="N-terminal domain of the delta subunit of the F1F0-ATP synthase"/>
    <property type="match status" value="1"/>
</dbReference>
<dbReference type="HAMAP" id="MF_01416">
    <property type="entry name" value="ATP_synth_delta_bact"/>
    <property type="match status" value="1"/>
</dbReference>
<dbReference type="InterPro" id="IPR026015">
    <property type="entry name" value="ATP_synth_OSCP/delta_N_sf"/>
</dbReference>
<dbReference type="InterPro" id="IPR000711">
    <property type="entry name" value="ATPase_OSCP/dsu"/>
</dbReference>
<dbReference type="NCBIfam" id="TIGR01145">
    <property type="entry name" value="ATP_synt_delta"/>
    <property type="match status" value="1"/>
</dbReference>
<dbReference type="NCBIfam" id="NF004402">
    <property type="entry name" value="PRK05758.2-2"/>
    <property type="match status" value="1"/>
</dbReference>
<dbReference type="PANTHER" id="PTHR11910">
    <property type="entry name" value="ATP SYNTHASE DELTA CHAIN"/>
    <property type="match status" value="1"/>
</dbReference>
<dbReference type="Pfam" id="PF00213">
    <property type="entry name" value="OSCP"/>
    <property type="match status" value="1"/>
</dbReference>
<dbReference type="PRINTS" id="PR00125">
    <property type="entry name" value="ATPASEDELTA"/>
</dbReference>
<dbReference type="SUPFAM" id="SSF47928">
    <property type="entry name" value="N-terminal domain of the delta subunit of the F1F0-ATP synthase"/>
    <property type="match status" value="1"/>
</dbReference>
<evidence type="ECO:0000255" key="1">
    <source>
        <dbReference type="HAMAP-Rule" id="MF_01416"/>
    </source>
</evidence>
<accession>Q6AQ13</accession>
<comment type="function">
    <text evidence="1">F(1)F(0) ATP synthase produces ATP from ADP in the presence of a proton or sodium gradient. F-type ATPases consist of two structural domains, F(1) containing the extramembraneous catalytic core and F(0) containing the membrane proton channel, linked together by a central stalk and a peripheral stalk. During catalysis, ATP synthesis in the catalytic domain of F(1) is coupled via a rotary mechanism of the central stalk subunits to proton translocation.</text>
</comment>
<comment type="function">
    <text evidence="1">This protein is part of the stalk that links CF(0) to CF(1). It either transmits conformational changes from CF(0) to CF(1) or is implicated in proton conduction.</text>
</comment>
<comment type="subunit">
    <text evidence="1">F-type ATPases have 2 components, F(1) - the catalytic core - and F(0) - the membrane proton channel. F(1) has five subunits: alpha(3), beta(3), gamma(1), delta(1), epsilon(1). F(0) has three main subunits: a(1), b(2) and c(10-14). The alpha and beta chains form an alternating ring which encloses part of the gamma chain. F(1) is attached to F(0) by a central stalk formed by the gamma and epsilon chains, while a peripheral stalk is formed by the delta and b chains.</text>
</comment>
<comment type="subcellular location">
    <subcellularLocation>
        <location evidence="1">Cell inner membrane</location>
        <topology evidence="1">Peripheral membrane protein</topology>
    </subcellularLocation>
</comment>
<comment type="similarity">
    <text evidence="1">Belongs to the ATPase delta chain family.</text>
</comment>
<name>ATPD_DESPS</name>